<feature type="chain" id="PRO_1000021729" description="Adenylate kinase">
    <location>
        <begin position="1"/>
        <end position="217"/>
    </location>
</feature>
<feature type="region of interest" description="NMP" evidence="1">
    <location>
        <begin position="30"/>
        <end position="59"/>
    </location>
</feature>
<feature type="region of interest" description="LID" evidence="1">
    <location>
        <begin position="126"/>
        <end position="163"/>
    </location>
</feature>
<feature type="binding site" evidence="1">
    <location>
        <begin position="10"/>
        <end position="15"/>
    </location>
    <ligand>
        <name>ATP</name>
        <dbReference type="ChEBI" id="CHEBI:30616"/>
    </ligand>
</feature>
<feature type="binding site" evidence="1">
    <location>
        <position position="31"/>
    </location>
    <ligand>
        <name>AMP</name>
        <dbReference type="ChEBI" id="CHEBI:456215"/>
    </ligand>
</feature>
<feature type="binding site" evidence="1">
    <location>
        <position position="36"/>
    </location>
    <ligand>
        <name>AMP</name>
        <dbReference type="ChEBI" id="CHEBI:456215"/>
    </ligand>
</feature>
<feature type="binding site" evidence="1">
    <location>
        <begin position="57"/>
        <end position="59"/>
    </location>
    <ligand>
        <name>AMP</name>
        <dbReference type="ChEBI" id="CHEBI:456215"/>
    </ligand>
</feature>
<feature type="binding site" evidence="1">
    <location>
        <begin position="85"/>
        <end position="88"/>
    </location>
    <ligand>
        <name>AMP</name>
        <dbReference type="ChEBI" id="CHEBI:456215"/>
    </ligand>
</feature>
<feature type="binding site" evidence="1">
    <location>
        <position position="92"/>
    </location>
    <ligand>
        <name>AMP</name>
        <dbReference type="ChEBI" id="CHEBI:456215"/>
    </ligand>
</feature>
<feature type="binding site" evidence="1">
    <location>
        <position position="127"/>
    </location>
    <ligand>
        <name>ATP</name>
        <dbReference type="ChEBI" id="CHEBI:30616"/>
    </ligand>
</feature>
<feature type="binding site" evidence="1">
    <location>
        <position position="130"/>
    </location>
    <ligand>
        <name>Zn(2+)</name>
        <dbReference type="ChEBI" id="CHEBI:29105"/>
        <note>structural</note>
    </ligand>
</feature>
<feature type="binding site" evidence="1">
    <location>
        <position position="133"/>
    </location>
    <ligand>
        <name>Zn(2+)</name>
        <dbReference type="ChEBI" id="CHEBI:29105"/>
        <note>structural</note>
    </ligand>
</feature>
<feature type="binding site" evidence="1">
    <location>
        <begin position="136"/>
        <end position="137"/>
    </location>
    <ligand>
        <name>ATP</name>
        <dbReference type="ChEBI" id="CHEBI:30616"/>
    </ligand>
</feature>
<feature type="binding site" evidence="1">
    <location>
        <position position="150"/>
    </location>
    <ligand>
        <name>Zn(2+)</name>
        <dbReference type="ChEBI" id="CHEBI:29105"/>
        <note>structural</note>
    </ligand>
</feature>
<feature type="binding site" evidence="1">
    <location>
        <position position="153"/>
    </location>
    <ligand>
        <name>Zn(2+)</name>
        <dbReference type="ChEBI" id="CHEBI:29105"/>
        <note>structural</note>
    </ligand>
</feature>
<feature type="binding site" evidence="1">
    <location>
        <position position="160"/>
    </location>
    <ligand>
        <name>AMP</name>
        <dbReference type="ChEBI" id="CHEBI:456215"/>
    </ligand>
</feature>
<feature type="binding site" evidence="1">
    <location>
        <position position="171"/>
    </location>
    <ligand>
        <name>AMP</name>
        <dbReference type="ChEBI" id="CHEBI:456215"/>
    </ligand>
</feature>
<feature type="binding site" evidence="1">
    <location>
        <position position="199"/>
    </location>
    <ligand>
        <name>ATP</name>
        <dbReference type="ChEBI" id="CHEBI:30616"/>
    </ligand>
</feature>
<evidence type="ECO:0000255" key="1">
    <source>
        <dbReference type="HAMAP-Rule" id="MF_00235"/>
    </source>
</evidence>
<proteinExistence type="inferred from homology"/>
<reference key="1">
    <citation type="journal article" date="2007" name="Proc. Natl. Acad. Sci. U.S.A.">
        <title>Genome and proteome of long-chain alkane degrading Geobacillus thermodenitrificans NG80-2 isolated from a deep-subsurface oil reservoir.</title>
        <authorList>
            <person name="Feng L."/>
            <person name="Wang W."/>
            <person name="Cheng J."/>
            <person name="Ren Y."/>
            <person name="Zhao G."/>
            <person name="Gao C."/>
            <person name="Tang Y."/>
            <person name="Liu X."/>
            <person name="Han W."/>
            <person name="Peng X."/>
            <person name="Liu R."/>
            <person name="Wang L."/>
        </authorList>
    </citation>
    <scope>NUCLEOTIDE SEQUENCE [LARGE SCALE GENOMIC DNA]</scope>
    <source>
        <strain>NG80-2</strain>
    </source>
</reference>
<protein>
    <recommendedName>
        <fullName evidence="1">Adenylate kinase</fullName>
        <shortName evidence="1">AK</shortName>
        <ecNumber evidence="1">2.7.4.3</ecNumber>
    </recommendedName>
    <alternativeName>
        <fullName evidence="1">ATP-AMP transphosphorylase</fullName>
    </alternativeName>
    <alternativeName>
        <fullName evidence="1">ATP:AMP phosphotransferase</fullName>
    </alternativeName>
    <alternativeName>
        <fullName evidence="1">Adenylate monophosphate kinase</fullName>
    </alternativeName>
</protein>
<keyword id="KW-0067">ATP-binding</keyword>
<keyword id="KW-0963">Cytoplasm</keyword>
<keyword id="KW-0418">Kinase</keyword>
<keyword id="KW-0479">Metal-binding</keyword>
<keyword id="KW-0545">Nucleotide biosynthesis</keyword>
<keyword id="KW-0547">Nucleotide-binding</keyword>
<keyword id="KW-0808">Transferase</keyword>
<keyword id="KW-0862">Zinc</keyword>
<accession>A4IJK9</accession>
<name>KAD_GEOTN</name>
<dbReference type="EC" id="2.7.4.3" evidence="1"/>
<dbReference type="EMBL" id="CP000557">
    <property type="protein sequence ID" value="ABO65513.1"/>
    <property type="molecule type" value="Genomic_DNA"/>
</dbReference>
<dbReference type="RefSeq" id="WP_008881924.1">
    <property type="nucleotide sequence ID" value="NC_009328.1"/>
</dbReference>
<dbReference type="SMR" id="A4IJK9"/>
<dbReference type="GeneID" id="87622305"/>
<dbReference type="KEGG" id="gtn:GTNG_0126"/>
<dbReference type="eggNOG" id="COG0563">
    <property type="taxonomic scope" value="Bacteria"/>
</dbReference>
<dbReference type="HOGENOM" id="CLU_032354_1_2_9"/>
<dbReference type="UniPathway" id="UPA00588">
    <property type="reaction ID" value="UER00649"/>
</dbReference>
<dbReference type="Proteomes" id="UP000001578">
    <property type="component" value="Chromosome"/>
</dbReference>
<dbReference type="GO" id="GO:0005737">
    <property type="term" value="C:cytoplasm"/>
    <property type="evidence" value="ECO:0007669"/>
    <property type="project" value="UniProtKB-SubCell"/>
</dbReference>
<dbReference type="GO" id="GO:0004017">
    <property type="term" value="F:adenylate kinase activity"/>
    <property type="evidence" value="ECO:0007669"/>
    <property type="project" value="UniProtKB-UniRule"/>
</dbReference>
<dbReference type="GO" id="GO:0005524">
    <property type="term" value="F:ATP binding"/>
    <property type="evidence" value="ECO:0007669"/>
    <property type="project" value="UniProtKB-UniRule"/>
</dbReference>
<dbReference type="GO" id="GO:0008270">
    <property type="term" value="F:zinc ion binding"/>
    <property type="evidence" value="ECO:0007669"/>
    <property type="project" value="UniProtKB-UniRule"/>
</dbReference>
<dbReference type="GO" id="GO:0044209">
    <property type="term" value="P:AMP salvage"/>
    <property type="evidence" value="ECO:0007669"/>
    <property type="project" value="UniProtKB-UniRule"/>
</dbReference>
<dbReference type="CDD" id="cd01428">
    <property type="entry name" value="ADK"/>
    <property type="match status" value="1"/>
</dbReference>
<dbReference type="FunFam" id="3.40.50.300:FF:000106">
    <property type="entry name" value="Adenylate kinase mitochondrial"/>
    <property type="match status" value="1"/>
</dbReference>
<dbReference type="Gene3D" id="3.40.50.300">
    <property type="entry name" value="P-loop containing nucleotide triphosphate hydrolases"/>
    <property type="match status" value="1"/>
</dbReference>
<dbReference type="HAMAP" id="MF_00235">
    <property type="entry name" value="Adenylate_kinase_Adk"/>
    <property type="match status" value="1"/>
</dbReference>
<dbReference type="InterPro" id="IPR006259">
    <property type="entry name" value="Adenyl_kin_sub"/>
</dbReference>
<dbReference type="InterPro" id="IPR000850">
    <property type="entry name" value="Adenylat/UMP-CMP_kin"/>
</dbReference>
<dbReference type="InterPro" id="IPR033690">
    <property type="entry name" value="Adenylat_kinase_CS"/>
</dbReference>
<dbReference type="InterPro" id="IPR007862">
    <property type="entry name" value="Adenylate_kinase_lid-dom"/>
</dbReference>
<dbReference type="InterPro" id="IPR027417">
    <property type="entry name" value="P-loop_NTPase"/>
</dbReference>
<dbReference type="NCBIfam" id="TIGR01351">
    <property type="entry name" value="adk"/>
    <property type="match status" value="1"/>
</dbReference>
<dbReference type="NCBIfam" id="NF001380">
    <property type="entry name" value="PRK00279.1-2"/>
    <property type="match status" value="1"/>
</dbReference>
<dbReference type="NCBIfam" id="NF001381">
    <property type="entry name" value="PRK00279.1-3"/>
    <property type="match status" value="1"/>
</dbReference>
<dbReference type="NCBIfam" id="NF011100">
    <property type="entry name" value="PRK14527.1"/>
    <property type="match status" value="1"/>
</dbReference>
<dbReference type="PANTHER" id="PTHR23359">
    <property type="entry name" value="NUCLEOTIDE KINASE"/>
    <property type="match status" value="1"/>
</dbReference>
<dbReference type="Pfam" id="PF00406">
    <property type="entry name" value="ADK"/>
    <property type="match status" value="1"/>
</dbReference>
<dbReference type="Pfam" id="PF05191">
    <property type="entry name" value="ADK_lid"/>
    <property type="match status" value="1"/>
</dbReference>
<dbReference type="PRINTS" id="PR00094">
    <property type="entry name" value="ADENYLTKNASE"/>
</dbReference>
<dbReference type="SUPFAM" id="SSF52540">
    <property type="entry name" value="P-loop containing nucleoside triphosphate hydrolases"/>
    <property type="match status" value="1"/>
</dbReference>
<dbReference type="PROSITE" id="PS00113">
    <property type="entry name" value="ADENYLATE_KINASE"/>
    <property type="match status" value="1"/>
</dbReference>
<organism>
    <name type="scientific">Geobacillus thermodenitrificans (strain NG80-2)</name>
    <dbReference type="NCBI Taxonomy" id="420246"/>
    <lineage>
        <taxon>Bacteria</taxon>
        <taxon>Bacillati</taxon>
        <taxon>Bacillota</taxon>
        <taxon>Bacilli</taxon>
        <taxon>Bacillales</taxon>
        <taxon>Anoxybacillaceae</taxon>
        <taxon>Geobacillus</taxon>
    </lineage>
</organism>
<comment type="function">
    <text evidence="1">Catalyzes the reversible transfer of the terminal phosphate group between ATP and AMP. Plays an important role in cellular energy homeostasis and in adenine nucleotide metabolism.</text>
</comment>
<comment type="catalytic activity">
    <reaction evidence="1">
        <text>AMP + ATP = 2 ADP</text>
        <dbReference type="Rhea" id="RHEA:12973"/>
        <dbReference type="ChEBI" id="CHEBI:30616"/>
        <dbReference type="ChEBI" id="CHEBI:456215"/>
        <dbReference type="ChEBI" id="CHEBI:456216"/>
        <dbReference type="EC" id="2.7.4.3"/>
    </reaction>
</comment>
<comment type="pathway">
    <text evidence="1">Purine metabolism; AMP biosynthesis via salvage pathway; AMP from ADP: step 1/1.</text>
</comment>
<comment type="subunit">
    <text evidence="1">Monomer.</text>
</comment>
<comment type="subcellular location">
    <subcellularLocation>
        <location evidence="1">Cytoplasm</location>
    </subcellularLocation>
</comment>
<comment type="domain">
    <text evidence="1">Consists of three domains, a large central CORE domain and two small peripheral domains, NMPbind and LID, which undergo movements during catalysis. The LID domain closes over the site of phosphoryl transfer upon ATP binding. Assembling and dissambling the active center during each catalytic cycle provides an effective means to prevent ATP hydrolysis. Some bacteria have evolved a zinc-coordinating structure that stabilizes the LID domain.</text>
</comment>
<comment type="similarity">
    <text evidence="1">Belongs to the adenylate kinase family.</text>
</comment>
<gene>
    <name evidence="1" type="primary">adk</name>
    <name type="ordered locus">GTNG_0126</name>
</gene>
<sequence>MNLVLMGLPGAGKGTQAEKIVETYGIPHISTGDMFRAAMKEGTPLGLQAKEYIDRGDLVPDEVTIGIVRERLSKDDCQNGFLLDGFPRTVAQAEALEAMLAEIGRKLDYVIHIDVRQDVLMERLTGRRICRNCGATYHLVFHPPAQPGVCDKCGGELYQRPDDNEATVANRLEVNTKQMKPLLDFYEQKGYLRHINGEQEMEKVFSDIRELLGGLTR</sequence>